<feature type="initiator methionine" description="Removed" evidence="1">
    <location>
        <position position="1"/>
    </location>
</feature>
<feature type="chain" id="PRO_1000067201" description="Endonuclease 8">
    <location>
        <begin position="2"/>
        <end position="263"/>
    </location>
</feature>
<feature type="zinc finger region" description="FPG-type" evidence="1">
    <location>
        <begin position="229"/>
        <end position="263"/>
    </location>
</feature>
<feature type="active site" description="Schiff-base intermediate with DNA" evidence="1">
    <location>
        <position position="2"/>
    </location>
</feature>
<feature type="active site" description="Proton donor" evidence="1">
    <location>
        <position position="3"/>
    </location>
</feature>
<feature type="active site" description="Proton donor; for beta-elimination activity" evidence="1">
    <location>
        <position position="53"/>
    </location>
</feature>
<feature type="active site" description="Proton donor; for delta-elimination activity" evidence="1">
    <location>
        <position position="253"/>
    </location>
</feature>
<feature type="binding site" evidence="1">
    <location>
        <position position="70"/>
    </location>
    <ligand>
        <name>DNA</name>
        <dbReference type="ChEBI" id="CHEBI:16991"/>
    </ligand>
</feature>
<feature type="binding site" evidence="1">
    <location>
        <position position="125"/>
    </location>
    <ligand>
        <name>DNA</name>
        <dbReference type="ChEBI" id="CHEBI:16991"/>
    </ligand>
</feature>
<feature type="binding site" evidence="1">
    <location>
        <position position="169"/>
    </location>
    <ligand>
        <name>DNA</name>
        <dbReference type="ChEBI" id="CHEBI:16991"/>
    </ligand>
</feature>
<organism>
    <name type="scientific">Escherichia coli O1:K1 / APEC</name>
    <dbReference type="NCBI Taxonomy" id="405955"/>
    <lineage>
        <taxon>Bacteria</taxon>
        <taxon>Pseudomonadati</taxon>
        <taxon>Pseudomonadota</taxon>
        <taxon>Gammaproteobacteria</taxon>
        <taxon>Enterobacterales</taxon>
        <taxon>Enterobacteriaceae</taxon>
        <taxon>Escherichia</taxon>
    </lineage>
</organism>
<sequence length="263" mass="29799">MPEGPEIRRAADNLEAAIKGKPLTDVWFAFPQLKSYQSRLIGQHVTHVETRGKALLTHFSNDLTLYSHNQLYGVWRVVDTGEEPQTTRVLRVKLQTADKTILLYSASDIEMLTPEQLTTHPFLQRVGPDVLDPNLTPEVVKERLLSPRFRNRQFAGLLLDQAFLAGLGNYLRVEILWQVGLTGNHKAKDLNAAQLDALAHALLDTPRLSYATRGQVDENKYHGALFRFKVFHRDGEPCERCGGIIEKTTLSSRPFYWCPGCQH</sequence>
<name>END8_ECOK1</name>
<dbReference type="EC" id="3.2.2.-" evidence="1"/>
<dbReference type="EC" id="4.2.99.18" evidence="1"/>
<dbReference type="EMBL" id="CP000468">
    <property type="protein sequence ID" value="ABJ00110.1"/>
    <property type="molecule type" value="Genomic_DNA"/>
</dbReference>
<dbReference type="RefSeq" id="WP_001114008.1">
    <property type="nucleotide sequence ID" value="NZ_CADILS010000005.1"/>
</dbReference>
<dbReference type="SMR" id="A1A8X0"/>
<dbReference type="KEGG" id="ecv:APECO1_1361"/>
<dbReference type="HOGENOM" id="CLU_038423_2_2_6"/>
<dbReference type="Proteomes" id="UP000008216">
    <property type="component" value="Chromosome"/>
</dbReference>
<dbReference type="GO" id="GO:0140078">
    <property type="term" value="F:class I DNA-(apurinic or apyrimidinic site) endonuclease activity"/>
    <property type="evidence" value="ECO:0007669"/>
    <property type="project" value="UniProtKB-EC"/>
</dbReference>
<dbReference type="GO" id="GO:0003684">
    <property type="term" value="F:damaged DNA binding"/>
    <property type="evidence" value="ECO:0007669"/>
    <property type="project" value="InterPro"/>
</dbReference>
<dbReference type="GO" id="GO:0000703">
    <property type="term" value="F:oxidized pyrimidine nucleobase lesion DNA N-glycosylase activity"/>
    <property type="evidence" value="ECO:0007669"/>
    <property type="project" value="UniProtKB-UniRule"/>
</dbReference>
<dbReference type="GO" id="GO:0008270">
    <property type="term" value="F:zinc ion binding"/>
    <property type="evidence" value="ECO:0007669"/>
    <property type="project" value="UniProtKB-UniRule"/>
</dbReference>
<dbReference type="GO" id="GO:0006284">
    <property type="term" value="P:base-excision repair"/>
    <property type="evidence" value="ECO:0007669"/>
    <property type="project" value="InterPro"/>
</dbReference>
<dbReference type="CDD" id="cd08965">
    <property type="entry name" value="EcNei-like_N"/>
    <property type="match status" value="1"/>
</dbReference>
<dbReference type="FunFam" id="1.10.8.50:FF:000005">
    <property type="entry name" value="Endonuclease 8"/>
    <property type="match status" value="1"/>
</dbReference>
<dbReference type="FunFam" id="3.20.190.10:FF:000002">
    <property type="entry name" value="Endonuclease 8"/>
    <property type="match status" value="1"/>
</dbReference>
<dbReference type="Gene3D" id="1.10.8.50">
    <property type="match status" value="1"/>
</dbReference>
<dbReference type="Gene3D" id="3.20.190.10">
    <property type="entry name" value="MutM-like, N-terminal"/>
    <property type="match status" value="1"/>
</dbReference>
<dbReference type="HAMAP" id="MF_01253">
    <property type="entry name" value="Endonuclease_8"/>
    <property type="match status" value="1"/>
</dbReference>
<dbReference type="InterPro" id="IPR015886">
    <property type="entry name" value="DNA_glyclase/AP_lyase_DNA-bd"/>
</dbReference>
<dbReference type="InterPro" id="IPR015887">
    <property type="entry name" value="DNA_glyclase_Znf_dom_DNA_BS"/>
</dbReference>
<dbReference type="InterPro" id="IPR044091">
    <property type="entry name" value="EcNei-like_N"/>
</dbReference>
<dbReference type="InterPro" id="IPR023713">
    <property type="entry name" value="Endonuclease-VIII"/>
</dbReference>
<dbReference type="InterPro" id="IPR012319">
    <property type="entry name" value="FPG_cat"/>
</dbReference>
<dbReference type="InterPro" id="IPR035937">
    <property type="entry name" value="MutM-like_N-ter"/>
</dbReference>
<dbReference type="InterPro" id="IPR010979">
    <property type="entry name" value="Ribosomal_uS13-like_H2TH"/>
</dbReference>
<dbReference type="InterPro" id="IPR000214">
    <property type="entry name" value="Znf_DNA_glyclase/AP_lyase"/>
</dbReference>
<dbReference type="InterPro" id="IPR010663">
    <property type="entry name" value="Znf_FPG/IleRS"/>
</dbReference>
<dbReference type="NCBIfam" id="NF007763">
    <property type="entry name" value="PRK10445.1"/>
    <property type="match status" value="1"/>
</dbReference>
<dbReference type="PANTHER" id="PTHR42697">
    <property type="entry name" value="ENDONUCLEASE 8"/>
    <property type="match status" value="1"/>
</dbReference>
<dbReference type="PANTHER" id="PTHR42697:SF1">
    <property type="entry name" value="ENDONUCLEASE 8"/>
    <property type="match status" value="1"/>
</dbReference>
<dbReference type="Pfam" id="PF01149">
    <property type="entry name" value="Fapy_DNA_glyco"/>
    <property type="match status" value="1"/>
</dbReference>
<dbReference type="Pfam" id="PF06831">
    <property type="entry name" value="H2TH"/>
    <property type="match status" value="1"/>
</dbReference>
<dbReference type="Pfam" id="PF06827">
    <property type="entry name" value="zf-FPG_IleRS"/>
    <property type="match status" value="1"/>
</dbReference>
<dbReference type="SMART" id="SM00898">
    <property type="entry name" value="Fapy_DNA_glyco"/>
    <property type="match status" value="1"/>
</dbReference>
<dbReference type="SMART" id="SM01232">
    <property type="entry name" value="H2TH"/>
    <property type="match status" value="1"/>
</dbReference>
<dbReference type="SUPFAM" id="SSF57716">
    <property type="entry name" value="Glucocorticoid receptor-like (DNA-binding domain)"/>
    <property type="match status" value="1"/>
</dbReference>
<dbReference type="SUPFAM" id="SSF81624">
    <property type="entry name" value="N-terminal domain of MutM-like DNA repair proteins"/>
    <property type="match status" value="1"/>
</dbReference>
<dbReference type="SUPFAM" id="SSF46946">
    <property type="entry name" value="S13-like H2TH domain"/>
    <property type="match status" value="1"/>
</dbReference>
<dbReference type="PROSITE" id="PS51068">
    <property type="entry name" value="FPG_CAT"/>
    <property type="match status" value="1"/>
</dbReference>
<dbReference type="PROSITE" id="PS01242">
    <property type="entry name" value="ZF_FPG_1"/>
    <property type="match status" value="1"/>
</dbReference>
<dbReference type="PROSITE" id="PS51066">
    <property type="entry name" value="ZF_FPG_2"/>
    <property type="match status" value="1"/>
</dbReference>
<gene>
    <name evidence="1" type="primary">nei</name>
    <name type="ordered locus">Ecok1_06160</name>
    <name type="ORF">APECO1_1361</name>
</gene>
<reference key="1">
    <citation type="journal article" date="2007" name="J. Bacteriol.">
        <title>The genome sequence of avian pathogenic Escherichia coli strain O1:K1:H7 shares strong similarities with human extraintestinal pathogenic E. coli genomes.</title>
        <authorList>
            <person name="Johnson T.J."/>
            <person name="Kariyawasam S."/>
            <person name="Wannemuehler Y."/>
            <person name="Mangiamele P."/>
            <person name="Johnson S.J."/>
            <person name="Doetkott C."/>
            <person name="Skyberg J.A."/>
            <person name="Lynne A.M."/>
            <person name="Johnson J.R."/>
            <person name="Nolan L.K."/>
        </authorList>
    </citation>
    <scope>NUCLEOTIDE SEQUENCE [LARGE SCALE GENOMIC DNA]</scope>
</reference>
<evidence type="ECO:0000255" key="1">
    <source>
        <dbReference type="HAMAP-Rule" id="MF_01253"/>
    </source>
</evidence>
<comment type="function">
    <text evidence="1">Involved in base excision repair of DNA damaged by oxidation or by mutagenic agents. Acts as a DNA glycosylase that recognizes and removes damaged bases. Has a preference for oxidized pyrimidines, such as thymine glycol, 5,6-dihydrouracil and 5,6-dihydrothymine. Has AP (apurinic/apyrimidinic) lyase activity and introduces nicks in the DNA strand. Cleaves the DNA backbone by beta-delta elimination to generate a single-strand break at the site of the removed base with both 3'- and 5'-phosphates.</text>
</comment>
<comment type="catalytic activity">
    <reaction evidence="1">
        <text>2'-deoxyribonucleotide-(2'-deoxyribose 5'-phosphate)-2'-deoxyribonucleotide-DNA = a 3'-end 2'-deoxyribonucleotide-(2,3-dehydro-2,3-deoxyribose 5'-phosphate)-DNA + a 5'-end 5'-phospho-2'-deoxyribonucleoside-DNA + H(+)</text>
        <dbReference type="Rhea" id="RHEA:66592"/>
        <dbReference type="Rhea" id="RHEA-COMP:13180"/>
        <dbReference type="Rhea" id="RHEA-COMP:16897"/>
        <dbReference type="Rhea" id="RHEA-COMP:17067"/>
        <dbReference type="ChEBI" id="CHEBI:15378"/>
        <dbReference type="ChEBI" id="CHEBI:136412"/>
        <dbReference type="ChEBI" id="CHEBI:157695"/>
        <dbReference type="ChEBI" id="CHEBI:167181"/>
        <dbReference type="EC" id="4.2.99.18"/>
    </reaction>
</comment>
<comment type="cofactor">
    <cofactor evidence="1">
        <name>Zn(2+)</name>
        <dbReference type="ChEBI" id="CHEBI:29105"/>
    </cofactor>
    <text evidence="1">Binds 1 zinc ion per subunit.</text>
</comment>
<comment type="similarity">
    <text evidence="1">Belongs to the FPG family.</text>
</comment>
<keyword id="KW-0227">DNA damage</keyword>
<keyword id="KW-0234">DNA repair</keyword>
<keyword id="KW-0238">DNA-binding</keyword>
<keyword id="KW-0326">Glycosidase</keyword>
<keyword id="KW-0378">Hydrolase</keyword>
<keyword id="KW-0456">Lyase</keyword>
<keyword id="KW-0479">Metal-binding</keyword>
<keyword id="KW-0511">Multifunctional enzyme</keyword>
<keyword id="KW-1185">Reference proteome</keyword>
<keyword id="KW-0862">Zinc</keyword>
<keyword id="KW-0863">Zinc-finger</keyword>
<protein>
    <recommendedName>
        <fullName evidence="1">Endonuclease 8</fullName>
    </recommendedName>
    <alternativeName>
        <fullName evidence="1">DNA glycosylase/AP lyase Nei</fullName>
        <ecNumber evidence="1">3.2.2.-</ecNumber>
        <ecNumber evidence="1">4.2.99.18</ecNumber>
    </alternativeName>
    <alternativeName>
        <fullName evidence="1">DNA-(apurinic or apyrimidinic site) lyase Nei</fullName>
    </alternativeName>
    <alternativeName>
        <fullName evidence="1">Endonuclease VIII</fullName>
    </alternativeName>
</protein>
<accession>A1A8X0</accession>
<proteinExistence type="inferred from homology"/>